<dbReference type="EMBL" id="AL844503">
    <property type="protein sequence ID" value="CAD49275.1"/>
    <property type="molecule type" value="Genomic_DNA"/>
</dbReference>
<dbReference type="RefSeq" id="XP_001351544.1">
    <property type="nucleotide sequence ID" value="XM_001351508.1"/>
</dbReference>
<dbReference type="PDB" id="4WAT">
    <property type="method" value="X-ray"/>
    <property type="resolution" value="2.18 A"/>
    <property type="chains" value="A=126-526"/>
</dbReference>
<dbReference type="PDB" id="5MI0">
    <property type="method" value="X-ray"/>
    <property type="resolution" value="2.35 A"/>
    <property type="chains" value="A=140-526"/>
</dbReference>
<dbReference type="PDB" id="6MPV">
    <property type="method" value="EM"/>
    <property type="resolution" value="7.17 A"/>
    <property type="chains" value="B=175-504"/>
</dbReference>
<dbReference type="PDB" id="6RCU">
    <property type="method" value="X-ray"/>
    <property type="resolution" value="4.00 A"/>
    <property type="chains" value="A=26-526"/>
</dbReference>
<dbReference type="PDB" id="6RCV">
    <property type="method" value="X-ray"/>
    <property type="resolution" value="3.58 A"/>
    <property type="chains" value="A/F=26-526"/>
</dbReference>
<dbReference type="PDB" id="7PHU">
    <property type="method" value="X-ray"/>
    <property type="resolution" value="2.53 A"/>
    <property type="chains" value="A=26-526"/>
</dbReference>
<dbReference type="PDB" id="8CDD">
    <property type="method" value="EM"/>
    <property type="resolution" value="3.00 A"/>
    <property type="chains" value="C=25-526"/>
</dbReference>
<dbReference type="PDB" id="8PWU">
    <property type="method" value="X-ray"/>
    <property type="resolution" value="3.15 A"/>
    <property type="chains" value="A/C/E/G/I/K=140-526"/>
</dbReference>
<dbReference type="PDB" id="8PWV">
    <property type="method" value="X-ray"/>
    <property type="resolution" value="2.07 A"/>
    <property type="chains" value="A/C/E/G=140-526"/>
</dbReference>
<dbReference type="PDB" id="8PWW">
    <property type="method" value="X-ray"/>
    <property type="resolution" value="1.95 A"/>
    <property type="chains" value="A/C=140-526"/>
</dbReference>
<dbReference type="PDB" id="8PWX">
    <property type="method" value="X-ray"/>
    <property type="resolution" value="3.20 A"/>
    <property type="chains" value="B=140-526"/>
</dbReference>
<dbReference type="PDB" id="8Q5D">
    <property type="method" value="X-ray"/>
    <property type="resolution" value="3.20 A"/>
    <property type="chains" value="A/D=140-526"/>
</dbReference>
<dbReference type="PDB" id="8QKR">
    <property type="method" value="X-ray"/>
    <property type="resolution" value="3.23 A"/>
    <property type="chains" value="A/D=140-513"/>
</dbReference>
<dbReference type="PDB" id="8QKS">
    <property type="method" value="X-ray"/>
    <property type="resolution" value="3.99 A"/>
    <property type="chains" value="A/D/G/H/M/N/S/T=143-499"/>
</dbReference>
<dbReference type="PDB" id="8RZ2">
    <property type="method" value="X-ray"/>
    <property type="resolution" value="2.40 A"/>
    <property type="chains" value="A=1-526"/>
</dbReference>
<dbReference type="PDBsum" id="4WAT"/>
<dbReference type="PDBsum" id="5MI0"/>
<dbReference type="PDBsum" id="6MPV"/>
<dbReference type="PDBsum" id="6RCU"/>
<dbReference type="PDBsum" id="6RCV"/>
<dbReference type="PDBsum" id="7PHU"/>
<dbReference type="PDBsum" id="8CDD"/>
<dbReference type="PDBsum" id="8PWU"/>
<dbReference type="PDBsum" id="8PWV"/>
<dbReference type="PDBsum" id="8PWW"/>
<dbReference type="PDBsum" id="8PWX"/>
<dbReference type="PDBsum" id="8Q5D"/>
<dbReference type="PDBsum" id="8QKR"/>
<dbReference type="PDBsum" id="8QKS"/>
<dbReference type="PDBsum" id="8RZ2"/>
<dbReference type="EMDB" id="EMD-16569"/>
<dbReference type="SMR" id="Q8IFM5"/>
<dbReference type="FunCoup" id="Q8IFM5">
    <property type="interactions" value="3"/>
</dbReference>
<dbReference type="IntAct" id="Q8IFM5">
    <property type="interactions" value="3"/>
</dbReference>
<dbReference type="STRING" id="36329.Q8IFM5"/>
<dbReference type="GlyCosmos" id="Q8IFM5">
    <property type="glycosylation" value="3 sites, No reported glycans"/>
</dbReference>
<dbReference type="iPTMnet" id="Q8IFM5"/>
<dbReference type="PaxDb" id="5833-PFD1145c"/>
<dbReference type="ABCD" id="Q8IFM5">
    <property type="antibodies" value="4 sequenced antibodies"/>
</dbReference>
<dbReference type="EnsemblProtists" id="CAD49275">
    <property type="protein sequence ID" value="CAD49275"/>
    <property type="gene ID" value="PF3D7_0424100"/>
</dbReference>
<dbReference type="GeneID" id="812437"/>
<dbReference type="KEGG" id="pfa:PF3D7_0424100"/>
<dbReference type="VEuPathDB" id="PlasmoDB:PF3D7_0424100"/>
<dbReference type="HOGENOM" id="CLU_518280_0_0_1"/>
<dbReference type="InParanoid" id="Q8IFM5"/>
<dbReference type="OMA" id="NHENDFN"/>
<dbReference type="OrthoDB" id="372219at2759"/>
<dbReference type="PhylomeDB" id="Q8IFM5"/>
<dbReference type="EvolutionaryTrace" id="Q8IFM5"/>
<dbReference type="Proteomes" id="UP000001450">
    <property type="component" value="Chromosome 4"/>
</dbReference>
<dbReference type="GO" id="GO:0045177">
    <property type="term" value="C:apical part of cell"/>
    <property type="evidence" value="ECO:0000314"/>
    <property type="project" value="UniProtKB"/>
</dbReference>
<dbReference type="GO" id="GO:0005923">
    <property type="term" value="C:bicellular tight junction"/>
    <property type="evidence" value="ECO:0000314"/>
    <property type="project" value="GeneDB"/>
</dbReference>
<dbReference type="GO" id="GO:0031410">
    <property type="term" value="C:cytoplasmic vesicle"/>
    <property type="evidence" value="ECO:0007669"/>
    <property type="project" value="UniProtKB-KW"/>
</dbReference>
<dbReference type="GO" id="GO:0005576">
    <property type="term" value="C:extracellular region"/>
    <property type="evidence" value="ECO:0007669"/>
    <property type="project" value="UniProtKB-SubCell"/>
</dbReference>
<dbReference type="GO" id="GO:0033644">
    <property type="term" value="C:host cell membrane"/>
    <property type="evidence" value="ECO:0000314"/>
    <property type="project" value="UniProtKB"/>
</dbReference>
<dbReference type="GO" id="GO:0020002">
    <property type="term" value="C:host cell plasma membrane"/>
    <property type="evidence" value="ECO:0007669"/>
    <property type="project" value="UniProtKB-SubCell"/>
</dbReference>
<dbReference type="GO" id="GO:0043655">
    <property type="term" value="C:host extracellular space"/>
    <property type="evidence" value="ECO:0000314"/>
    <property type="project" value="UniProtKB"/>
</dbReference>
<dbReference type="GO" id="GO:0016020">
    <property type="term" value="C:membrane"/>
    <property type="evidence" value="ECO:0007669"/>
    <property type="project" value="UniProtKB-KW"/>
</dbReference>
<dbReference type="GO" id="GO:0032991">
    <property type="term" value="C:protein-containing complex"/>
    <property type="evidence" value="ECO:0000314"/>
    <property type="project" value="UniProtKB"/>
</dbReference>
<dbReference type="GO" id="GO:0020008">
    <property type="term" value="C:rhoptry"/>
    <property type="evidence" value="ECO:0000314"/>
    <property type="project" value="UniProtKB"/>
</dbReference>
<dbReference type="GO" id="GO:0034591">
    <property type="term" value="C:rhoptry lumen"/>
    <property type="evidence" value="ECO:0000314"/>
    <property type="project" value="UniProtKB"/>
</dbReference>
<dbReference type="GO" id="GO:0008201">
    <property type="term" value="F:heparin binding"/>
    <property type="evidence" value="ECO:0000314"/>
    <property type="project" value="GeneDB"/>
</dbReference>
<dbReference type="GO" id="GO:0046789">
    <property type="term" value="F:host cell surface receptor binding"/>
    <property type="evidence" value="ECO:0000353"/>
    <property type="project" value="UniProtKB"/>
</dbReference>
<dbReference type="GO" id="GO:0044409">
    <property type="term" value="P:symbiont entry into host"/>
    <property type="evidence" value="ECO:0000314"/>
    <property type="project" value="UniProtKB"/>
</dbReference>
<dbReference type="GO" id="GO:0046718">
    <property type="term" value="P:symbiont entry into host cell"/>
    <property type="evidence" value="ECO:0000269"/>
    <property type="project" value="SigSci"/>
</dbReference>
<dbReference type="InterPro" id="IPR041668">
    <property type="entry name" value="Rh5_CC"/>
</dbReference>
<dbReference type="Pfam" id="PF18515">
    <property type="entry name" value="Rh5"/>
    <property type="match status" value="1"/>
</dbReference>
<evidence type="ECO:0000255" key="1"/>
<evidence type="ECO:0000255" key="2">
    <source>
        <dbReference type="PROSITE-ProRule" id="PRU00498"/>
    </source>
</evidence>
<evidence type="ECO:0000256" key="3">
    <source>
        <dbReference type="SAM" id="MobiDB-lite"/>
    </source>
</evidence>
<evidence type="ECO:0000269" key="4">
    <source>
    </source>
</evidence>
<evidence type="ECO:0000269" key="5">
    <source>
    </source>
</evidence>
<evidence type="ECO:0000269" key="6">
    <source>
    </source>
</evidence>
<evidence type="ECO:0000269" key="7">
    <source>
    </source>
</evidence>
<evidence type="ECO:0000269" key="8">
    <source>
    </source>
</evidence>
<evidence type="ECO:0000269" key="9">
    <source>
    </source>
</evidence>
<evidence type="ECO:0000269" key="10">
    <source>
    </source>
</evidence>
<evidence type="ECO:0000269" key="11">
    <source>
    </source>
</evidence>
<evidence type="ECO:0000269" key="12">
    <source>
    </source>
</evidence>
<evidence type="ECO:0000269" key="13">
    <source>
    </source>
</evidence>
<evidence type="ECO:0000269" key="14">
    <source>
    </source>
</evidence>
<evidence type="ECO:0000269" key="15">
    <source>
    </source>
</evidence>
<evidence type="ECO:0000269" key="16">
    <source>
    </source>
</evidence>
<evidence type="ECO:0000303" key="17">
    <source>
    </source>
</evidence>
<evidence type="ECO:0000305" key="18"/>
<evidence type="ECO:0000312" key="19">
    <source>
        <dbReference type="EMBL" id="CAD49275.1"/>
    </source>
</evidence>
<evidence type="ECO:0000312" key="20">
    <source>
        <dbReference type="Proteomes" id="UP000001450"/>
    </source>
</evidence>
<evidence type="ECO:0007744" key="21">
    <source>
        <dbReference type="PDB" id="4WAT"/>
    </source>
</evidence>
<evidence type="ECO:0007744" key="22">
    <source>
        <dbReference type="PDB" id="5MI0"/>
    </source>
</evidence>
<evidence type="ECO:0007744" key="23">
    <source>
        <dbReference type="PDB" id="6MPV"/>
    </source>
</evidence>
<evidence type="ECO:0007744" key="24">
    <source>
        <dbReference type="PDB" id="6RCU"/>
    </source>
</evidence>
<evidence type="ECO:0007744" key="25">
    <source>
        <dbReference type="PDB" id="6RCV"/>
    </source>
</evidence>
<evidence type="ECO:0007829" key="26">
    <source>
        <dbReference type="PDB" id="8PWW"/>
    </source>
</evidence>
<evidence type="ECO:0007829" key="27">
    <source>
        <dbReference type="PDB" id="8PWX"/>
    </source>
</evidence>
<reference evidence="20" key="1">
    <citation type="journal article" date="2002" name="Nature">
        <title>Genome sequence of the human malaria parasite Plasmodium falciparum.</title>
        <authorList>
            <person name="Gardner M.J."/>
            <person name="Hall N."/>
            <person name="Fung E."/>
            <person name="White O."/>
            <person name="Berriman M."/>
            <person name="Hyman R.W."/>
            <person name="Carlton J.M."/>
            <person name="Pain A."/>
            <person name="Nelson K.E."/>
            <person name="Bowman S."/>
            <person name="Paulsen I.T."/>
            <person name="James K.D."/>
            <person name="Eisen J.A."/>
            <person name="Rutherford K.M."/>
            <person name="Salzberg S.L."/>
            <person name="Craig A."/>
            <person name="Kyes S."/>
            <person name="Chan M.-S."/>
            <person name="Nene V."/>
            <person name="Shallom S.J."/>
            <person name="Suh B."/>
            <person name="Peterson J."/>
            <person name="Angiuoli S."/>
            <person name="Pertea M."/>
            <person name="Allen J."/>
            <person name="Selengut J."/>
            <person name="Haft D."/>
            <person name="Mather M.W."/>
            <person name="Vaidya A.B."/>
            <person name="Martin D.M.A."/>
            <person name="Fairlamb A.H."/>
            <person name="Fraunholz M.J."/>
            <person name="Roos D.S."/>
            <person name="Ralph S.A."/>
            <person name="McFadden G.I."/>
            <person name="Cummings L.M."/>
            <person name="Subramanian G.M."/>
            <person name="Mungall C."/>
            <person name="Venter J.C."/>
            <person name="Carucci D.J."/>
            <person name="Hoffman S.L."/>
            <person name="Newbold C."/>
            <person name="Davis R.W."/>
            <person name="Fraser C.M."/>
            <person name="Barrell B.G."/>
        </authorList>
    </citation>
    <scope>NUCLEOTIDE SEQUENCE [LARGE SCALE GENOMIC DNA]</scope>
    <source>
        <strain evidence="20">3D7</strain>
    </source>
</reference>
<reference evidence="20" key="2">
    <citation type="journal article" date="2002" name="Nature">
        <title>Sequence of Plasmodium falciparum chromosomes 1, 3-9 and 13.</title>
        <authorList>
            <person name="Hall N."/>
            <person name="Pain A."/>
            <person name="Berriman M."/>
            <person name="Churcher C.M."/>
            <person name="Harris B."/>
            <person name="Harris D."/>
            <person name="Mungall K.L."/>
            <person name="Bowman S."/>
            <person name="Atkin R."/>
            <person name="Baker S."/>
            <person name="Barron A."/>
            <person name="Brooks K."/>
            <person name="Buckee C.O."/>
            <person name="Burrows C."/>
            <person name="Cherevach I."/>
            <person name="Chillingworth C."/>
            <person name="Chillingworth T."/>
            <person name="Christodoulou Z."/>
            <person name="Clark L."/>
            <person name="Clark R."/>
            <person name="Corton C."/>
            <person name="Cronin A."/>
            <person name="Davies R.M."/>
            <person name="Davis P."/>
            <person name="Dear P."/>
            <person name="Dearden F."/>
            <person name="Doggett J."/>
            <person name="Feltwell T."/>
            <person name="Goble A."/>
            <person name="Goodhead I."/>
            <person name="Gwilliam R."/>
            <person name="Hamlin N."/>
            <person name="Hance Z."/>
            <person name="Harper D."/>
            <person name="Hauser H."/>
            <person name="Hornsby T."/>
            <person name="Holroyd S."/>
            <person name="Horrocks P."/>
            <person name="Humphray S."/>
            <person name="Jagels K."/>
            <person name="James K.D."/>
            <person name="Johnson D."/>
            <person name="Kerhornou A."/>
            <person name="Knights A."/>
            <person name="Konfortov B."/>
            <person name="Kyes S."/>
            <person name="Larke N."/>
            <person name="Lawson D."/>
            <person name="Lennard N."/>
            <person name="Line A."/>
            <person name="Maddison M."/>
            <person name="Mclean J."/>
            <person name="Mooney P."/>
            <person name="Moule S."/>
            <person name="Murphy L."/>
            <person name="Oliver K."/>
            <person name="Ormond D."/>
            <person name="Price C."/>
            <person name="Quail M.A."/>
            <person name="Rabbinowitsch E."/>
            <person name="Rajandream M.A."/>
            <person name="Rutter S."/>
            <person name="Rutherford K.M."/>
            <person name="Sanders M."/>
            <person name="Simmonds M."/>
            <person name="Seeger K."/>
            <person name="Sharp S."/>
            <person name="Smith R."/>
            <person name="Squares R."/>
            <person name="Squares S."/>
            <person name="Stevens K."/>
            <person name="Taylor K."/>
            <person name="Tivey A."/>
            <person name="Unwin L."/>
            <person name="Whitehead S."/>
            <person name="Woodward J.R."/>
            <person name="Sulston J.E."/>
            <person name="Craig A."/>
            <person name="Newbold C."/>
            <person name="Barrell B.G."/>
        </authorList>
    </citation>
    <scope>NUCLEOTIDE SEQUENCE [LARGE SCALE GENOMIC DNA]</scope>
    <source>
        <strain evidence="20">3D7</strain>
    </source>
</reference>
<reference evidence="18" key="3">
    <citation type="journal article" date="2008" name="PLoS ONE">
        <title>PfRH5: a novel reticulocyte-binding family homolog of plasmodium falciparum that binds to the erythrocyte, and an investigation of its receptor.</title>
        <authorList>
            <person name="Rodriguez M."/>
            <person name="Lustigman S."/>
            <person name="Montero E."/>
            <person name="Oksov Y."/>
            <person name="Lobo C.A."/>
        </authorList>
    </citation>
    <scope>FUNCTION</scope>
</reference>
<reference evidence="18" key="4">
    <citation type="journal article" date="2009" name="Int. J. Parasitol.">
        <title>Reticulocyte-binding protein homologue 5 - an essential adhesin involved in invasion of human erythrocytes by Plasmodium falciparum.</title>
        <authorList>
            <person name="Baum J."/>
            <person name="Chen L."/>
            <person name="Healer J."/>
            <person name="Lopaticki S."/>
            <person name="Boyle M."/>
            <person name="Triglia T."/>
            <person name="Ehlgen F."/>
            <person name="Ralph S.A."/>
            <person name="Beeson J.G."/>
            <person name="Cowman A.F."/>
        </authorList>
    </citation>
    <scope>FUNCTION</scope>
    <scope>SUBCELLULAR LOCATION</scope>
    <scope>DEVELOPMENTAL STAGE</scope>
    <scope>PROTEOLYTIC CLEAVAGE</scope>
</reference>
<reference evidence="18" key="5">
    <citation type="journal article" date="2011" name="Nature">
        <title>Basigin is a receptor essential for erythrocyte invasion by Plasmodium falciparum.</title>
        <authorList>
            <person name="Crosnier C."/>
            <person name="Bustamante L.Y."/>
            <person name="Bartholdson S.J."/>
            <person name="Bei A.K."/>
            <person name="Theron M."/>
            <person name="Uchikawa M."/>
            <person name="Mboup S."/>
            <person name="Ndir O."/>
            <person name="Kwiatkowski D.P."/>
            <person name="Duraisingh M.T."/>
            <person name="Rayner J.C."/>
            <person name="Wright G.J."/>
        </authorList>
    </citation>
    <scope>FUNCTION</scope>
    <scope>INTERACTION WITH HUMAN BSG</scope>
</reference>
<reference evidence="18" key="6">
    <citation type="journal article" date="2011" name="PLoS Pathog.">
        <title>An EGF-like protein forms a complex with PfRh5 and is required for invasion of human erythrocytes by Plasmodium falciparum.</title>
        <authorList>
            <person name="Chen L."/>
            <person name="Lopaticki S."/>
            <person name="Riglar D.T."/>
            <person name="Dekiwadia C."/>
            <person name="Uboldi A.D."/>
            <person name="Tham W.H."/>
            <person name="O'Neill M.T."/>
            <person name="Richard D."/>
            <person name="Baum J."/>
            <person name="Ralph S.A."/>
            <person name="Cowman A.F."/>
        </authorList>
    </citation>
    <scope>IDENTIFICATION IN COMPLEX WITH RIPR</scope>
    <scope>SUBCELLULAR LOCATION</scope>
    <scope>DEVELOPMENTAL STAGE</scope>
    <scope>PROTEOLYTIC CLEAVAGE</scope>
</reference>
<reference evidence="18" key="7">
    <citation type="journal article" date="2013" name="Proc. Natl. Acad. Sci. U.S.A.">
        <title>RH5-Basigin interaction plays a major role in the host tropism of Plasmodium falciparum.</title>
        <authorList>
            <person name="Wanaguru M."/>
            <person name="Liu W."/>
            <person name="Hahn B.H."/>
            <person name="Rayner J.C."/>
            <person name="Wright G.J."/>
        </authorList>
    </citation>
    <scope>INTERACTION WITH HUMAN BSG</scope>
</reference>
<reference evidence="18" key="8">
    <citation type="journal article" date="2015" name="Proc. Natl. Acad. Sci. U.S.A.">
        <title>Multiprotein complex between the GPI-anchored CyRPA with PfRH5 and PfRipr is crucial for Plasmodium falciparum erythrocyte invasion.</title>
        <authorList>
            <person name="Reddy K.S."/>
            <person name="Amlabu E."/>
            <person name="Pandey A.K."/>
            <person name="Mitra P."/>
            <person name="Chauhan V.S."/>
            <person name="Gaur D."/>
        </authorList>
    </citation>
    <scope>FUNCTION</scope>
    <scope>IDENTIFICATION IN THE PFRH5 ADHESION COMPLEX</scope>
    <scope>SUBCELLULAR LOCATION</scope>
    <scope>IDENTIFICATION BY MASS SPECTROMETRY</scope>
    <scope>DEVELOPMENTAL STAGE</scope>
</reference>
<reference evidence="18" key="9">
    <citation type="journal article" date="2016" name="Cell Host Microbe">
        <title>Essential Role of the PfRh5/PfRipr/CyRPA Complex during Plasmodium falciparum Invasion of Erythrocytes.</title>
        <authorList>
            <person name="Volz J.C."/>
            <person name="Yap A."/>
            <person name="Sisquella X."/>
            <person name="Thompson J.K."/>
            <person name="Lim N.T."/>
            <person name="Whitehead L.W."/>
            <person name="Chen L."/>
            <person name="Lampe M."/>
            <person name="Tham W.H."/>
            <person name="Wilson D."/>
            <person name="Nebl T."/>
            <person name="Marapana D."/>
            <person name="Triglia T."/>
            <person name="Wong W."/>
            <person name="Rogers K.L."/>
            <person name="Cowman A.F."/>
        </authorList>
    </citation>
    <scope>FUNCTION</scope>
    <scope>IDENTIFICATION IN THE PFRH5 ADHESION COMPLEX</scope>
    <scope>SUBCELLULAR LOCATION</scope>
    <scope>DEVELOPMENTAL STAGE</scope>
</reference>
<reference evidence="18" key="10">
    <citation type="journal article" date="2017" name="Cell. Microbiol.">
        <title>P. falciparum RH5-Basigin interaction induces changes in the cytoskeleton of the host RBC.</title>
        <authorList>
            <person name="Aniweh Y."/>
            <person name="Gao X."/>
            <person name="Hao P."/>
            <person name="Meng W."/>
            <person name="Lai S.K."/>
            <person name="Gunalan K."/>
            <person name="Chu T.T."/>
            <person name="Sinha A."/>
            <person name="Lescar J."/>
            <person name="Chandramohanadas R."/>
            <person name="Li H.Y."/>
            <person name="Sze S.K."/>
            <person name="Preiser P.R."/>
        </authorList>
    </citation>
    <scope>FUNCTION</scope>
    <scope>SUBCELLULAR LOCATION</scope>
    <scope>DEVELOPMENTAL STAGE</scope>
    <scope>PROTEOLYTIC CLEAVAGE</scope>
</reference>
<reference evidence="18" key="11">
    <citation type="journal article" date="2017" name="Nat. Commun.">
        <title>P113 is a merozoite surface protein that binds the N terminus of Plasmodium falciparum RH5.</title>
        <authorList>
            <person name="Galaway F."/>
            <person name="Drought L.G."/>
            <person name="Fala M."/>
            <person name="Cross N."/>
            <person name="Kemp A.C."/>
            <person name="Rayner J.C."/>
            <person name="Wright G.J."/>
        </authorList>
    </citation>
    <scope>FUNCTION</scope>
    <scope>IDENTIFICATION IN THE PFRH5 ADHESION COMPLEX</scope>
    <scope>IDENTIFICATION IN COMPLEX WITH P113 AND HUMAN BSG</scope>
    <scope>INTERACTION WITH P113; CYRPA AND HUMAN BSG</scope>
    <scope>BIOTECHNOLOGY</scope>
    <scope>PROTEOLYTIC CLEAVAGE</scope>
</reference>
<reference evidence="21" key="12">
    <citation type="journal article" date="2014" name="Elife">
        <title>Crystal structure of PfRh5, an essential P. falciparum ligand for invasion of human erythrocytes.</title>
        <authorList>
            <person name="Chen L."/>
            <person name="Xu Y."/>
            <person name="Healer J."/>
            <person name="Thompson J.K."/>
            <person name="Smith B.J."/>
            <person name="Lawrence M.C."/>
            <person name="Cowman A.F."/>
        </authorList>
    </citation>
    <scope>X-RAY CRYSTALLOGRAPHY (2.18 ANGSTROMS) OF 126-526</scope>
    <scope>FUNCTION</scope>
    <scope>INTERACTION WITH HUMAN BSG</scope>
    <scope>BIOTECHNOLOGY</scope>
    <scope>GLYCOSYLATION AT ASN-214</scope>
    <scope>DISULFIDE BONDS</scope>
</reference>
<reference evidence="22" key="13">
    <citation type="journal article" date="2017" name="Proc. Natl. Acad. Sci. U.S.A.">
        <title>One-step design of a stable variant of the malaria invasion protein RH5 for use as a vaccine immunogen.</title>
        <authorList>
            <person name="Campeotto I."/>
            <person name="Goldenzweig A."/>
            <person name="Davey J."/>
            <person name="Barfod L."/>
            <person name="Marshall J.M."/>
            <person name="Silk S.E."/>
            <person name="Wright K.E."/>
            <person name="Draper S.J."/>
            <person name="Higgins M.K."/>
            <person name="Fleishman S.J."/>
        </authorList>
    </citation>
    <scope>X-RAY CRYSTALLOGRAPHY (2.35 ANGSTROMS) OF 140-526</scope>
    <scope>INTERACTION WITH HUMAN BSG</scope>
    <scope>DISULFIDE BONDS</scope>
    <scope>BIOTECHNOLOGY</scope>
</reference>
<reference evidence="24 25" key="14">
    <citation type="journal article" date="2019" name="Cell">
        <title>Human Antibodies that Slow Erythrocyte Invasion Potentiate Malaria-Neutralizing Antibodies.</title>
        <authorList>
            <person name="Alanine D.G.W."/>
            <person name="Quinkert D."/>
            <person name="Kumarasingha R."/>
            <person name="Mehmood S."/>
            <person name="Donnellan F.R."/>
            <person name="Minkah N.K."/>
            <person name="Dadonaite B."/>
            <person name="Diouf A."/>
            <person name="Galaway F."/>
            <person name="Silk S.E."/>
            <person name="Jamwal A."/>
            <person name="Marshall J.M."/>
            <person name="Miura K."/>
            <person name="Foquet L."/>
            <person name="Elias S.C."/>
            <person name="Labbe G.M."/>
            <person name="Douglas A.D."/>
            <person name="Jin J."/>
            <person name="Payne R.O."/>
            <person name="Illingworth J.J."/>
            <person name="Pattinson D.J."/>
            <person name="Pulido D."/>
            <person name="Williams B.G."/>
            <person name="de Jongh W.A."/>
            <person name="Wright G.J."/>
            <person name="Kappe S.H.I."/>
            <person name="Robinson C.V."/>
            <person name="Long C.A."/>
            <person name="Crabb B.S."/>
            <person name="Gilson P.R."/>
            <person name="Higgins M.K."/>
            <person name="Draper S.J."/>
        </authorList>
    </citation>
    <scope>X-RAY CRYSTALLOGRAPHY (3.58 ANGSTROMS) OF 26-526</scope>
    <scope>FUNCTION</scope>
    <scope>BIOTECHNOLOGY</scope>
    <scope>DISULFIDE BONDS</scope>
</reference>
<reference evidence="23" key="15">
    <citation type="journal article" date="2019" name="Nature">
        <title>Structure of Plasmodium falciparum Rh5-CyRPA-Ripr invasion complex.</title>
        <authorList>
            <person name="Wong W."/>
            <person name="Huang R."/>
            <person name="Menant S."/>
            <person name="Hong C."/>
            <person name="Sandow J.J."/>
            <person name="Birkinshaw R.W."/>
            <person name="Healer J."/>
            <person name="Hodder A.N."/>
            <person name="Kanjee U."/>
            <person name="Tonkin C.J."/>
            <person name="Heckmann D."/>
            <person name="Soroka V."/>
            <person name="Sogaard T.M.M."/>
            <person name="Jorgensen T."/>
            <person name="Duraisingh M.T."/>
            <person name="Czabotar P.E."/>
            <person name="de Jongh W.A."/>
            <person name="Tham W.H."/>
            <person name="Webb A.I."/>
            <person name="Yu Z."/>
            <person name="Cowman A.F."/>
        </authorList>
    </citation>
    <scope>STRUCTURE BY ELECTRON MICROSCOPY (7.17 ANGSTROMS) OF 175-504 IN COMPLEX WITH CYRPA AND RIPR</scope>
    <scope>IDENTIFICATION IN THE PFRH5 ADHESION COMPLEX</scope>
    <scope>INTERACTION WITH HUMAN BSG</scope>
    <scope>SUBCELLULAR LOCATION</scope>
    <scope>DISULFIDE BONDS</scope>
</reference>
<comment type="function">
    <text evidence="4 5 7 9 10 11 13 14 16">Essential for the invasion of host erythrocytes by blood stage merozoites (PubMed:18827878, PubMed:19000690, PubMed:22080952, PubMed:25296023, PubMed:25583518, PubMed:27374406, PubMed:28186186, PubMed:28409866, PubMed:31204103). By binding P113 at the surface of the merozoite and human BSG/basigin on the erythrocyte membrane, leads to the establishment of a tight junction between the merozoite and host erythrocyte membranes (PubMed:22080952, PubMed:25296023, PubMed:25583518, PubMed:27374406, PubMed:28186186). In addition, the interaction with BSG results in BSG dimerization which triggers an increase in intracellular Ca(2+) in the erythrocyte (PubMed:27374406, PubMed:28409866). This essential step leads to a rearrangement of the erythrocyte cytoskeleton required for the merozoite invasion (PubMed:28409866).</text>
</comment>
<comment type="subunit">
    <text evidence="6 7 8 9 10 11 12 13 15">Forms a complex composed of RH5, P113 and human BSG/basigin; the complex bridges the merozoite and host erythrocyte membranes (PubMed:28186186). Within the complex, interacts (via C-terminus) with human BSG/basigin isoform 2 (via the extracellular domain); the interaction is independent of BSG glycosylation status (PubMed:22080952, PubMed:24297912, PubMed:25296023, PubMed:28096331, PubMed:28186186, PubMed:30542156). Weakly interacts with P.troglodytes BSG but not with G.gorilla BSG (PubMed:24297912). Also, interacts (via N-terminus) with P113; the interaction tethers RH5 to the merozoite membrane (PubMed:28186186). Component of the PfRH5 adhesion complex composed of 1 copy of CyRPA, RH5 and RIPR; the complex is formed during merozoite invasion of host erythrocytes specifically at the interface between the parasite and host membranes (PubMed:21909261, PubMed:25583518, PubMed:27374406, PubMed:28186186, PubMed:30542156). Within the complex, interacts with CyRPA (PubMed:28186186, PubMed:30542156). CyRPA recruits RIPR to the RH5-P113-BSG complex; the formation of the PfRH5 adhesion complex increases the affinity of RH5 for BSG and probably leads to the release of RH5 from P113 while maintaining the interaction of the PfRH5 adhesion complex with BSG (PubMed:28186186, PubMed:30542156).</text>
</comment>
<comment type="interaction">
    <interactant intactId="EBI-22304327">
        <id>Q8IFM5</id>
    </interactant>
    <interactant intactId="EBI-25648504">
        <id>A0A0M5L610</id>
        <label>BSG</label>
    </interactant>
    <organismsDiffer>true</organismsDiffer>
    <experiments>3</experiments>
</comment>
<comment type="interaction">
    <interactant intactId="EBI-22304327">
        <id>Q8IFM5</id>
    </interactant>
    <interactant intactId="EBI-11037868">
        <id>P35613-2</id>
        <label>BSG</label>
    </interactant>
    <organismsDiffer>true</organismsDiffer>
    <experiments>3</experiments>
</comment>
<comment type="subcellular location">
    <subcellularLocation>
        <location evidence="5 6 10 14">Secreted</location>
    </subcellularLocation>
    <subcellularLocation>
        <location evidence="5 6 14">Cytoplasmic vesicle</location>
        <location evidence="5 6 14">Secretory vesicle</location>
        <location evidence="5 6 14">Rhoptry lumen</location>
    </subcellularLocation>
    <subcellularLocation>
        <location evidence="10 11 15">Host cell membrane</location>
    </subcellularLocation>
    <text evidence="5 6 10 11 14">In late schizonts, localizes in the rhoptry lumen (PubMed:19000690, PubMed:21909261, PubMed:28409866). During merozoite invasion of host erythrocytes, secreted at the merozoite apical surface where it colocalizes with CyPRA and RIPR at the interface between the merozoite and the erythrocyte (PubMed:19000690, PubMed:21909261, PubMed:25583518, PubMed:27374406).</text>
</comment>
<comment type="developmental stage">
    <text evidence="5 6 10 11 14">Expressed during parasite asexual blood stages, specifically at the schizont stage and in free merozoites (at protein level).</text>
</comment>
<comment type="PTM">
    <text evidence="5 6 13 14">Cleaved into a 45kDa form during merozoite invasion of host erythrocyte.</text>
</comment>
<comment type="biotechnology">
    <text evidence="9 12 13 16">Potential candidate for the development of parasite blood stage vaccines. In vitro and in vivo, induces neutralizing antibodies capable of inhibiting merozoite invasion of host erythrocytes.</text>
</comment>
<proteinExistence type="evidence at protein level"/>
<sequence>MIRIKKKLILTIIYIHLFILNRLSFENAIKKTKNQENNLTLLPIKSTEEEKDDIKNGKDIKKEIDNDKENIKTNNAKDHSTYIKSYLNTNVNDGLKYLFIPSHNSFIKKYSVFNQINDGMLLNEKNDVKNNEDYKNVDYKNVNFLQYHFKELSNYNIANSIDILQEKEGHLDFVIIPHYTFLDYYKHLSYNSIYHKSSTYGKCIAVDAFIKKINETYDKVKSKCNDIKNDLIATIKKLEHPYDINNKNDDSYRYDISEEIDDKSEETDDETEEVEDSIQDTDSNHTPSNKKKNDLMNRTFKKMMDEYNTKKKKLIKCIKNHENDFNKICMDMKNYGTNLFEQLSCYNNNFCNTNGIRYHYDEYIHKLILSVKSKNLNKDLSDMTNILQQSELLLTNLNKKMGSYIYIDTIKFIHKEMKHIFNRIEYHTKIINDKTKIIQDKIKLNIWRTFQKDELLKRILDMSNEYSLFITSDHLRQMLYNTFYSKEKHLNNIFHHLIYVLQMKFNDVPIKMEYFQTYKKNKPLTQ</sequence>
<gene>
    <name evidence="18" type="primary">RH5</name>
    <name evidence="17" type="synonym">PFD1145c</name>
    <name evidence="19" type="ORF">PF3D7_0424100</name>
</gene>
<accession>Q8IFM5</accession>
<organism evidence="20">
    <name type="scientific">Plasmodium falciparum (isolate 3D7)</name>
    <dbReference type="NCBI Taxonomy" id="36329"/>
    <lineage>
        <taxon>Eukaryota</taxon>
        <taxon>Sar</taxon>
        <taxon>Alveolata</taxon>
        <taxon>Apicomplexa</taxon>
        <taxon>Aconoidasida</taxon>
        <taxon>Haemosporida</taxon>
        <taxon>Plasmodiidae</taxon>
        <taxon>Plasmodium</taxon>
        <taxon>Plasmodium (Laverania)</taxon>
    </lineage>
</organism>
<name>RH5_PLAF7</name>
<protein>
    <recommendedName>
        <fullName evidence="17">Reticulocyte-binding protein homolog 5</fullName>
        <shortName evidence="17">PfRH5</shortName>
    </recommendedName>
</protein>
<keyword id="KW-0002">3D-structure</keyword>
<keyword id="KW-0968">Cytoplasmic vesicle</keyword>
<keyword id="KW-1015">Disulfide bond</keyword>
<keyword id="KW-0325">Glycoprotein</keyword>
<keyword id="KW-1032">Host cell membrane</keyword>
<keyword id="KW-1043">Host membrane</keyword>
<keyword id="KW-0472">Membrane</keyword>
<keyword id="KW-1185">Reference proteome</keyword>
<keyword id="KW-0964">Secreted</keyword>
<keyword id="KW-0732">Signal</keyword>
<feature type="signal peptide" evidence="1">
    <location>
        <begin position="1"/>
        <end position="24"/>
    </location>
</feature>
<feature type="chain" id="PRO_0000448483" description="Reticulocyte-binding protein homolog 5" evidence="1">
    <location>
        <begin position="25"/>
        <end position="526"/>
    </location>
</feature>
<feature type="region of interest" description="Mediates interaction with human BSG" evidence="13">
    <location>
        <begin position="33"/>
        <end position="51"/>
    </location>
</feature>
<feature type="region of interest" description="Disordered" evidence="3">
    <location>
        <begin position="259"/>
        <end position="294"/>
    </location>
</feature>
<feature type="compositionally biased region" description="Acidic residues" evidence="3">
    <location>
        <begin position="259"/>
        <end position="279"/>
    </location>
</feature>
<feature type="site" description="Cleavage" evidence="13">
    <location>
        <begin position="140"/>
        <end position="141"/>
    </location>
</feature>
<feature type="glycosylation site" description="N-linked (GlcNAc...) asparagine" evidence="2">
    <location>
        <position position="38"/>
    </location>
</feature>
<feature type="glycosylation site" description="N-linked (GlcNAc...) asparagine" evidence="9 21">
    <location>
        <position position="214"/>
    </location>
</feature>
<feature type="glycosylation site" description="N-linked (GlcNAc...) asparagine" evidence="2">
    <location>
        <position position="297"/>
    </location>
</feature>
<feature type="disulfide bond" evidence="9 12 15 16 21 22 23 24 25">
    <location>
        <begin position="224"/>
        <end position="317"/>
    </location>
</feature>
<feature type="disulfide bond" evidence="9 12 15 16 21 22 23 24 25">
    <location>
        <begin position="345"/>
        <end position="351"/>
    </location>
</feature>
<feature type="helix" evidence="26">
    <location>
        <begin position="157"/>
        <end position="159"/>
    </location>
</feature>
<feature type="strand" evidence="26">
    <location>
        <begin position="160"/>
        <end position="164"/>
    </location>
</feature>
<feature type="strand" evidence="27">
    <location>
        <begin position="166"/>
        <end position="169"/>
    </location>
</feature>
<feature type="strand" evidence="26">
    <location>
        <begin position="172"/>
        <end position="175"/>
    </location>
</feature>
<feature type="helix" evidence="26">
    <location>
        <begin position="176"/>
        <end position="194"/>
    </location>
</feature>
<feature type="helix" evidence="26">
    <location>
        <begin position="197"/>
        <end position="202"/>
    </location>
</feature>
<feature type="helix" evidence="26">
    <location>
        <begin position="203"/>
        <end position="221"/>
    </location>
</feature>
<feature type="helix" evidence="26">
    <location>
        <begin position="222"/>
        <end position="224"/>
    </location>
</feature>
<feature type="helix" evidence="26">
    <location>
        <begin position="225"/>
        <end position="239"/>
    </location>
</feature>
<feature type="helix" evidence="26">
    <location>
        <begin position="300"/>
        <end position="320"/>
    </location>
</feature>
<feature type="helix" evidence="26">
    <location>
        <begin position="322"/>
        <end position="341"/>
    </location>
</feature>
<feature type="strand" evidence="26">
    <location>
        <begin position="350"/>
        <end position="352"/>
    </location>
</feature>
<feature type="helix" evidence="26">
    <location>
        <begin position="354"/>
        <end position="363"/>
    </location>
</feature>
<feature type="helix" evidence="26">
    <location>
        <begin position="365"/>
        <end position="373"/>
    </location>
</feature>
<feature type="helix" evidence="26">
    <location>
        <begin position="376"/>
        <end position="400"/>
    </location>
</feature>
<feature type="helix" evidence="26">
    <location>
        <begin position="405"/>
        <end position="444"/>
    </location>
</feature>
<feature type="strand" evidence="26">
    <location>
        <begin position="445"/>
        <end position="450"/>
    </location>
</feature>
<feature type="helix" evidence="26">
    <location>
        <begin position="452"/>
        <end position="499"/>
    </location>
</feature>